<proteinExistence type="inferred from homology"/>
<sequence>MSETPTSPNQDLPEAPQAGPLSQWLTSQGFDHQILGNDHLGIERLGVEPLALPLVATALKSKGFDYLQVQGGFDQGPGEPLVSFYHLVQVGGSDGASTAEVRLEVSLARDGDLTVPSLYPLFRGADWQERETFDLFGINYSGHPHPKRLLMPEDWVGYPLRKDYVQPDFYELQDAY</sequence>
<comment type="function">
    <text evidence="1">NDH-1 shuttles electrons from an unknown electron donor, via FMN and iron-sulfur (Fe-S) centers, to quinones in the respiratory and/or the photosynthetic chain. The immediate electron acceptor for the enzyme in this species is believed to be plastoquinone. Couples the redox reaction to proton translocation, and thus conserves the redox energy in a proton gradient. Cyanobacterial NDH-1 also plays a role in inorganic carbon-concentration.</text>
</comment>
<comment type="catalytic activity">
    <reaction evidence="1">
        <text>a plastoquinone + NADH + (n+1) H(+)(in) = a plastoquinol + NAD(+) + n H(+)(out)</text>
        <dbReference type="Rhea" id="RHEA:42608"/>
        <dbReference type="Rhea" id="RHEA-COMP:9561"/>
        <dbReference type="Rhea" id="RHEA-COMP:9562"/>
        <dbReference type="ChEBI" id="CHEBI:15378"/>
        <dbReference type="ChEBI" id="CHEBI:17757"/>
        <dbReference type="ChEBI" id="CHEBI:57540"/>
        <dbReference type="ChEBI" id="CHEBI:57945"/>
        <dbReference type="ChEBI" id="CHEBI:62192"/>
    </reaction>
</comment>
<comment type="catalytic activity">
    <reaction evidence="1">
        <text>a plastoquinone + NADPH + (n+1) H(+)(in) = a plastoquinol + NADP(+) + n H(+)(out)</text>
        <dbReference type="Rhea" id="RHEA:42612"/>
        <dbReference type="Rhea" id="RHEA-COMP:9561"/>
        <dbReference type="Rhea" id="RHEA-COMP:9562"/>
        <dbReference type="ChEBI" id="CHEBI:15378"/>
        <dbReference type="ChEBI" id="CHEBI:17757"/>
        <dbReference type="ChEBI" id="CHEBI:57783"/>
        <dbReference type="ChEBI" id="CHEBI:58349"/>
        <dbReference type="ChEBI" id="CHEBI:62192"/>
    </reaction>
</comment>
<comment type="subunit">
    <text evidence="1">NDH-1 can be composed of about 15 different subunits; different subcomplexes with different compositions have been identified which probably have different functions.</text>
</comment>
<comment type="subcellular location">
    <subcellularLocation>
        <location evidence="1">Cellular thylakoid membrane</location>
        <topology evidence="1">Peripheral membrane protein</topology>
        <orientation evidence="1">Cytoplasmic side</orientation>
    </subcellularLocation>
</comment>
<comment type="similarity">
    <text evidence="1">Belongs to the complex I 30 kDa subunit family.</text>
</comment>
<feature type="chain" id="PRO_0000358212" description="NAD(P)H-quinone oxidoreductase subunit J">
    <location>
        <begin position="1"/>
        <end position="176"/>
    </location>
</feature>
<feature type="region of interest" description="Disordered" evidence="2">
    <location>
        <begin position="1"/>
        <end position="22"/>
    </location>
</feature>
<feature type="compositionally biased region" description="Polar residues" evidence="2">
    <location>
        <begin position="1"/>
        <end position="10"/>
    </location>
</feature>
<gene>
    <name evidence="1" type="primary">ndhJ</name>
    <name type="ordered locus">SynRCC307_0215</name>
</gene>
<protein>
    <recommendedName>
        <fullName evidence="1">NAD(P)H-quinone oxidoreductase subunit J</fullName>
        <ecNumber evidence="1">7.1.1.-</ecNumber>
    </recommendedName>
    <alternativeName>
        <fullName>NAD(P)H dehydrogenase subunit J</fullName>
    </alternativeName>
    <alternativeName>
        <fullName evidence="1">NADH-plastoquinone oxidoreductase subunit J</fullName>
    </alternativeName>
    <alternativeName>
        <fullName evidence="1">NDH-1 subunit J</fullName>
        <shortName evidence="1">NDH-J</shortName>
    </alternativeName>
</protein>
<evidence type="ECO:0000255" key="1">
    <source>
        <dbReference type="HAMAP-Rule" id="MF_01357"/>
    </source>
</evidence>
<evidence type="ECO:0000256" key="2">
    <source>
        <dbReference type="SAM" id="MobiDB-lite"/>
    </source>
</evidence>
<accession>A5GQF9</accession>
<keyword id="KW-0472">Membrane</keyword>
<keyword id="KW-0520">NAD</keyword>
<keyword id="KW-0521">NADP</keyword>
<keyword id="KW-0618">Plastoquinone</keyword>
<keyword id="KW-0874">Quinone</keyword>
<keyword id="KW-1185">Reference proteome</keyword>
<keyword id="KW-0793">Thylakoid</keyword>
<keyword id="KW-1278">Translocase</keyword>
<keyword id="KW-0813">Transport</keyword>
<dbReference type="EC" id="7.1.1.-" evidence="1"/>
<dbReference type="EMBL" id="CT978603">
    <property type="protein sequence ID" value="CAK27118.1"/>
    <property type="molecule type" value="Genomic_DNA"/>
</dbReference>
<dbReference type="SMR" id="A5GQF9"/>
<dbReference type="STRING" id="316278.SynRCC307_0215"/>
<dbReference type="KEGG" id="syr:SynRCC307_0215"/>
<dbReference type="eggNOG" id="COG0852">
    <property type="taxonomic scope" value="Bacteria"/>
</dbReference>
<dbReference type="HOGENOM" id="CLU_042628_9_1_3"/>
<dbReference type="OrthoDB" id="9803286at2"/>
<dbReference type="Proteomes" id="UP000001115">
    <property type="component" value="Chromosome"/>
</dbReference>
<dbReference type="GO" id="GO:0031676">
    <property type="term" value="C:plasma membrane-derived thylakoid membrane"/>
    <property type="evidence" value="ECO:0007669"/>
    <property type="project" value="UniProtKB-SubCell"/>
</dbReference>
<dbReference type="GO" id="GO:0008137">
    <property type="term" value="F:NADH dehydrogenase (ubiquinone) activity"/>
    <property type="evidence" value="ECO:0007669"/>
    <property type="project" value="InterPro"/>
</dbReference>
<dbReference type="GO" id="GO:0048038">
    <property type="term" value="F:quinone binding"/>
    <property type="evidence" value="ECO:0007669"/>
    <property type="project" value="UniProtKB-KW"/>
</dbReference>
<dbReference type="GO" id="GO:0019684">
    <property type="term" value="P:photosynthesis, light reaction"/>
    <property type="evidence" value="ECO:0007669"/>
    <property type="project" value="UniProtKB-UniRule"/>
</dbReference>
<dbReference type="Gene3D" id="3.30.460.80">
    <property type="entry name" value="NADH:ubiquinone oxidoreductase, 30kDa subunit"/>
    <property type="match status" value="1"/>
</dbReference>
<dbReference type="HAMAP" id="MF_01357">
    <property type="entry name" value="NDH1_NuoC"/>
    <property type="match status" value="1"/>
</dbReference>
<dbReference type="InterPro" id="IPR010218">
    <property type="entry name" value="NADH_DH_suC"/>
</dbReference>
<dbReference type="InterPro" id="IPR037232">
    <property type="entry name" value="NADH_quin_OxRdtase_su_C/D-like"/>
</dbReference>
<dbReference type="InterPro" id="IPR001268">
    <property type="entry name" value="NADH_UbQ_OxRdtase_30kDa_su"/>
</dbReference>
<dbReference type="InterPro" id="IPR020396">
    <property type="entry name" value="NADH_UbQ_OxRdtase_CS"/>
</dbReference>
<dbReference type="NCBIfam" id="NF009141">
    <property type="entry name" value="PRK12494.1"/>
    <property type="match status" value="1"/>
</dbReference>
<dbReference type="PANTHER" id="PTHR10884:SF14">
    <property type="entry name" value="NADH DEHYDROGENASE [UBIQUINONE] IRON-SULFUR PROTEIN 3, MITOCHONDRIAL"/>
    <property type="match status" value="1"/>
</dbReference>
<dbReference type="PANTHER" id="PTHR10884">
    <property type="entry name" value="NADH DEHYDROGENASE UBIQUINONE IRON-SULFUR PROTEIN 3"/>
    <property type="match status" value="1"/>
</dbReference>
<dbReference type="Pfam" id="PF00329">
    <property type="entry name" value="Complex1_30kDa"/>
    <property type="match status" value="1"/>
</dbReference>
<dbReference type="SUPFAM" id="SSF143243">
    <property type="entry name" value="Nqo5-like"/>
    <property type="match status" value="1"/>
</dbReference>
<dbReference type="PROSITE" id="PS00542">
    <property type="entry name" value="COMPLEX1_30K"/>
    <property type="match status" value="1"/>
</dbReference>
<organism>
    <name type="scientific">Synechococcus sp. (strain RCC307)</name>
    <dbReference type="NCBI Taxonomy" id="316278"/>
    <lineage>
        <taxon>Bacteria</taxon>
        <taxon>Bacillati</taxon>
        <taxon>Cyanobacteriota</taxon>
        <taxon>Cyanophyceae</taxon>
        <taxon>Synechococcales</taxon>
        <taxon>Synechococcaceae</taxon>
        <taxon>Synechococcus</taxon>
    </lineage>
</organism>
<reference key="1">
    <citation type="submission" date="2006-05" db="EMBL/GenBank/DDBJ databases">
        <authorList>
            <consortium name="Genoscope"/>
        </authorList>
    </citation>
    <scope>NUCLEOTIDE SEQUENCE [LARGE SCALE GENOMIC DNA]</scope>
    <source>
        <strain>RCC307</strain>
    </source>
</reference>
<name>NDHJ_SYNR3</name>